<proteinExistence type="inferred from homology"/>
<keyword id="KW-0067">ATP-binding</keyword>
<keyword id="KW-1003">Cell membrane</keyword>
<keyword id="KW-0186">Copper</keyword>
<keyword id="KW-0187">Copper transport</keyword>
<keyword id="KW-0406">Ion transport</keyword>
<keyword id="KW-0460">Magnesium</keyword>
<keyword id="KW-0472">Membrane</keyword>
<keyword id="KW-0479">Metal-binding</keyword>
<keyword id="KW-0547">Nucleotide-binding</keyword>
<keyword id="KW-0597">Phosphoprotein</keyword>
<keyword id="KW-0677">Repeat</keyword>
<keyword id="KW-1278">Translocase</keyword>
<keyword id="KW-0812">Transmembrane</keyword>
<keyword id="KW-1133">Transmembrane helix</keyword>
<keyword id="KW-0813">Transport</keyword>
<organism>
    <name type="scientific">Staphylococcus aureus (strain USA300 / TCH1516)</name>
    <dbReference type="NCBI Taxonomy" id="451516"/>
    <lineage>
        <taxon>Bacteria</taxon>
        <taxon>Bacillati</taxon>
        <taxon>Bacillota</taxon>
        <taxon>Bacilli</taxon>
        <taxon>Bacillales</taxon>
        <taxon>Staphylococcaceae</taxon>
        <taxon>Staphylococcus</taxon>
    </lineage>
</organism>
<comment type="function">
    <text evidence="1">Involved in copper export.</text>
</comment>
<comment type="catalytic activity">
    <reaction>
        <text>Cu(+)(in) + ATP + H2O = Cu(+)(out) + ADP + phosphate + H(+)</text>
        <dbReference type="Rhea" id="RHEA:25792"/>
        <dbReference type="ChEBI" id="CHEBI:15377"/>
        <dbReference type="ChEBI" id="CHEBI:15378"/>
        <dbReference type="ChEBI" id="CHEBI:30616"/>
        <dbReference type="ChEBI" id="CHEBI:43474"/>
        <dbReference type="ChEBI" id="CHEBI:49552"/>
        <dbReference type="ChEBI" id="CHEBI:456216"/>
        <dbReference type="EC" id="7.2.2.8"/>
    </reaction>
</comment>
<comment type="subcellular location">
    <subcellularLocation>
        <location evidence="1">Cell membrane</location>
        <topology evidence="1">Multi-pass membrane protein</topology>
    </subcellularLocation>
</comment>
<comment type="similarity">
    <text evidence="4">Belongs to the cation transport ATPase (P-type) (TC 3.A.3) family. Type IB subfamily.</text>
</comment>
<evidence type="ECO:0000250" key="1"/>
<evidence type="ECO:0000255" key="2"/>
<evidence type="ECO:0000255" key="3">
    <source>
        <dbReference type="PROSITE-ProRule" id="PRU00280"/>
    </source>
</evidence>
<evidence type="ECO:0000305" key="4"/>
<dbReference type="EC" id="7.2.2.8"/>
<dbReference type="EMBL" id="CP000730">
    <property type="protein sequence ID" value="ABX30538.1"/>
    <property type="molecule type" value="Genomic_DNA"/>
</dbReference>
<dbReference type="RefSeq" id="WP_000024128.1">
    <property type="nucleotide sequence ID" value="NC_010079.1"/>
</dbReference>
<dbReference type="SMR" id="A8Z3F8"/>
<dbReference type="KEGG" id="sax:USA300HOU_2552"/>
<dbReference type="HOGENOM" id="CLU_001771_0_3_9"/>
<dbReference type="GO" id="GO:0005886">
    <property type="term" value="C:plasma membrane"/>
    <property type="evidence" value="ECO:0007669"/>
    <property type="project" value="UniProtKB-SubCell"/>
</dbReference>
<dbReference type="GO" id="GO:0005524">
    <property type="term" value="F:ATP binding"/>
    <property type="evidence" value="ECO:0007669"/>
    <property type="project" value="UniProtKB-KW"/>
</dbReference>
<dbReference type="GO" id="GO:0016887">
    <property type="term" value="F:ATP hydrolysis activity"/>
    <property type="evidence" value="ECO:0007669"/>
    <property type="project" value="InterPro"/>
</dbReference>
<dbReference type="GO" id="GO:0005507">
    <property type="term" value="F:copper ion binding"/>
    <property type="evidence" value="ECO:0007669"/>
    <property type="project" value="InterPro"/>
</dbReference>
<dbReference type="GO" id="GO:0043682">
    <property type="term" value="F:P-type divalent copper transporter activity"/>
    <property type="evidence" value="ECO:0007669"/>
    <property type="project" value="TreeGrafter"/>
</dbReference>
<dbReference type="GO" id="GO:0140581">
    <property type="term" value="F:P-type monovalent copper transporter activity"/>
    <property type="evidence" value="ECO:0007669"/>
    <property type="project" value="UniProtKB-EC"/>
</dbReference>
<dbReference type="GO" id="GO:0055070">
    <property type="term" value="P:copper ion homeostasis"/>
    <property type="evidence" value="ECO:0007669"/>
    <property type="project" value="TreeGrafter"/>
</dbReference>
<dbReference type="CDD" id="cd00371">
    <property type="entry name" value="HMA"/>
    <property type="match status" value="2"/>
</dbReference>
<dbReference type="CDD" id="cd02094">
    <property type="entry name" value="P-type_ATPase_Cu-like"/>
    <property type="match status" value="1"/>
</dbReference>
<dbReference type="FunFam" id="3.40.1110.10:FF:000038">
    <property type="entry name" value="Copper-exporting P-type ATPase"/>
    <property type="match status" value="1"/>
</dbReference>
<dbReference type="FunFam" id="3.40.1110.10:FF:000049">
    <property type="entry name" value="Copper-exporting P-type ATPase"/>
    <property type="match status" value="1"/>
</dbReference>
<dbReference type="FunFam" id="2.70.150.10:FF:000020">
    <property type="entry name" value="Copper-exporting P-type ATPase A"/>
    <property type="match status" value="1"/>
</dbReference>
<dbReference type="FunFam" id="3.30.70.100:FF:000005">
    <property type="entry name" value="Copper-exporting P-type ATPase A"/>
    <property type="match status" value="2"/>
</dbReference>
<dbReference type="FunFam" id="3.40.50.1000:FF:000144">
    <property type="entry name" value="copper-transporting ATPase 1 isoform X2"/>
    <property type="match status" value="1"/>
</dbReference>
<dbReference type="Gene3D" id="3.30.70.100">
    <property type="match status" value="2"/>
</dbReference>
<dbReference type="Gene3D" id="3.40.1110.10">
    <property type="entry name" value="Calcium-transporting ATPase, cytoplasmic domain N"/>
    <property type="match status" value="2"/>
</dbReference>
<dbReference type="Gene3D" id="2.70.150.10">
    <property type="entry name" value="Calcium-transporting ATPase, cytoplasmic transduction domain A"/>
    <property type="match status" value="1"/>
</dbReference>
<dbReference type="Gene3D" id="3.40.50.1000">
    <property type="entry name" value="HAD superfamily/HAD-like"/>
    <property type="match status" value="1"/>
</dbReference>
<dbReference type="InterPro" id="IPR023299">
    <property type="entry name" value="ATPase_P-typ_cyto_dom_N"/>
</dbReference>
<dbReference type="InterPro" id="IPR018303">
    <property type="entry name" value="ATPase_P-typ_P_site"/>
</dbReference>
<dbReference type="InterPro" id="IPR023298">
    <property type="entry name" value="ATPase_P-typ_TM_dom_sf"/>
</dbReference>
<dbReference type="InterPro" id="IPR008250">
    <property type="entry name" value="ATPase_P-typ_transduc_dom_A_sf"/>
</dbReference>
<dbReference type="InterPro" id="IPR036412">
    <property type="entry name" value="HAD-like_sf"/>
</dbReference>
<dbReference type="InterPro" id="IPR023214">
    <property type="entry name" value="HAD_sf"/>
</dbReference>
<dbReference type="InterPro" id="IPR017969">
    <property type="entry name" value="Heavy-metal-associated_CS"/>
</dbReference>
<dbReference type="InterPro" id="IPR006122">
    <property type="entry name" value="HMA_Cu_ion-bd"/>
</dbReference>
<dbReference type="InterPro" id="IPR006121">
    <property type="entry name" value="HMA_dom"/>
</dbReference>
<dbReference type="InterPro" id="IPR036163">
    <property type="entry name" value="HMA_dom_sf"/>
</dbReference>
<dbReference type="InterPro" id="IPR027256">
    <property type="entry name" value="P-typ_ATPase_IB"/>
</dbReference>
<dbReference type="InterPro" id="IPR001757">
    <property type="entry name" value="P_typ_ATPase"/>
</dbReference>
<dbReference type="InterPro" id="IPR044492">
    <property type="entry name" value="P_typ_ATPase_HD_dom"/>
</dbReference>
<dbReference type="NCBIfam" id="TIGR01511">
    <property type="entry name" value="ATPase-IB1_Cu"/>
    <property type="match status" value="1"/>
</dbReference>
<dbReference type="NCBIfam" id="TIGR01525">
    <property type="entry name" value="ATPase-IB_hvy"/>
    <property type="match status" value="1"/>
</dbReference>
<dbReference type="NCBIfam" id="TIGR01494">
    <property type="entry name" value="ATPase_P-type"/>
    <property type="match status" value="1"/>
</dbReference>
<dbReference type="NCBIfam" id="TIGR00003">
    <property type="entry name" value="copper ion binding protein"/>
    <property type="match status" value="2"/>
</dbReference>
<dbReference type="PANTHER" id="PTHR43520">
    <property type="entry name" value="ATP7, ISOFORM B"/>
    <property type="match status" value="1"/>
</dbReference>
<dbReference type="PANTHER" id="PTHR43520:SF8">
    <property type="entry name" value="P-TYPE CU(+) TRANSPORTER"/>
    <property type="match status" value="1"/>
</dbReference>
<dbReference type="Pfam" id="PF00122">
    <property type="entry name" value="E1-E2_ATPase"/>
    <property type="match status" value="1"/>
</dbReference>
<dbReference type="Pfam" id="PF00403">
    <property type="entry name" value="HMA"/>
    <property type="match status" value="2"/>
</dbReference>
<dbReference type="Pfam" id="PF00702">
    <property type="entry name" value="Hydrolase"/>
    <property type="match status" value="1"/>
</dbReference>
<dbReference type="PRINTS" id="PR00119">
    <property type="entry name" value="CATATPASE"/>
</dbReference>
<dbReference type="PRINTS" id="PR00943">
    <property type="entry name" value="CUATPASE"/>
</dbReference>
<dbReference type="SFLD" id="SFLDG00002">
    <property type="entry name" value="C1.7:_P-type_atpase_like"/>
    <property type="match status" value="1"/>
</dbReference>
<dbReference type="SFLD" id="SFLDF00027">
    <property type="entry name" value="p-type_atpase"/>
    <property type="match status" value="1"/>
</dbReference>
<dbReference type="SUPFAM" id="SSF81653">
    <property type="entry name" value="Calcium ATPase, transduction domain A"/>
    <property type="match status" value="1"/>
</dbReference>
<dbReference type="SUPFAM" id="SSF81665">
    <property type="entry name" value="Calcium ATPase, transmembrane domain M"/>
    <property type="match status" value="1"/>
</dbReference>
<dbReference type="SUPFAM" id="SSF56784">
    <property type="entry name" value="HAD-like"/>
    <property type="match status" value="1"/>
</dbReference>
<dbReference type="SUPFAM" id="SSF55008">
    <property type="entry name" value="HMA, heavy metal-associated domain"/>
    <property type="match status" value="2"/>
</dbReference>
<dbReference type="PROSITE" id="PS00154">
    <property type="entry name" value="ATPASE_E1_E2"/>
    <property type="match status" value="1"/>
</dbReference>
<dbReference type="PROSITE" id="PS01047">
    <property type="entry name" value="HMA_1"/>
    <property type="match status" value="2"/>
</dbReference>
<dbReference type="PROSITE" id="PS50846">
    <property type="entry name" value="HMA_2"/>
    <property type="match status" value="2"/>
</dbReference>
<name>COPA_STAAT</name>
<feature type="chain" id="PRO_0000350595" description="Copper-exporting P-type ATPase">
    <location>
        <begin position="1"/>
        <end position="802"/>
    </location>
</feature>
<feature type="transmembrane region" description="Helical" evidence="2">
    <location>
        <begin position="161"/>
        <end position="181"/>
    </location>
</feature>
<feature type="transmembrane region" description="Helical" evidence="2">
    <location>
        <begin position="192"/>
        <end position="212"/>
    </location>
</feature>
<feature type="transmembrane region" description="Helical" evidence="2">
    <location>
        <begin position="224"/>
        <end position="244"/>
    </location>
</feature>
<feature type="transmembrane region" description="Helical" evidence="2">
    <location>
        <begin position="256"/>
        <end position="276"/>
    </location>
</feature>
<feature type="transmembrane region" description="Helical" evidence="2">
    <location>
        <begin position="411"/>
        <end position="431"/>
    </location>
</feature>
<feature type="transmembrane region" description="Helical" evidence="2">
    <location>
        <begin position="438"/>
        <end position="458"/>
    </location>
</feature>
<feature type="transmembrane region" description="Helical" evidence="2">
    <location>
        <begin position="748"/>
        <end position="767"/>
    </location>
</feature>
<feature type="transmembrane region" description="Helical" evidence="2">
    <location>
        <begin position="771"/>
        <end position="790"/>
    </location>
</feature>
<feature type="domain" description="HMA 1" evidence="3">
    <location>
        <begin position="5"/>
        <end position="70"/>
    </location>
</feature>
<feature type="domain" description="HMA 2" evidence="3">
    <location>
        <begin position="72"/>
        <end position="138"/>
    </location>
</feature>
<feature type="active site" description="4-aspartylphosphate intermediate" evidence="1">
    <location>
        <position position="495"/>
    </location>
</feature>
<feature type="binding site" evidence="3">
    <location>
        <position position="16"/>
    </location>
    <ligand>
        <name>Cu(+)</name>
        <dbReference type="ChEBI" id="CHEBI:49552"/>
        <label>1</label>
    </ligand>
</feature>
<feature type="binding site" evidence="3">
    <location>
        <position position="19"/>
    </location>
    <ligand>
        <name>Cu(+)</name>
        <dbReference type="ChEBI" id="CHEBI:49552"/>
        <label>1</label>
    </ligand>
</feature>
<feature type="binding site" evidence="3">
    <location>
        <position position="83"/>
    </location>
    <ligand>
        <name>Cu(+)</name>
        <dbReference type="ChEBI" id="CHEBI:49552"/>
        <label>2</label>
    </ligand>
</feature>
<feature type="binding site" evidence="3">
    <location>
        <position position="86"/>
    </location>
    <ligand>
        <name>Cu(+)</name>
        <dbReference type="ChEBI" id="CHEBI:49552"/>
        <label>2</label>
    </ligand>
</feature>
<feature type="binding site">
    <location>
        <position position="690"/>
    </location>
    <ligand>
        <name>Mg(2+)</name>
        <dbReference type="ChEBI" id="CHEBI:18420"/>
    </ligand>
</feature>
<feature type="binding site">
    <location>
        <position position="694"/>
    </location>
    <ligand>
        <name>Mg(2+)</name>
        <dbReference type="ChEBI" id="CHEBI:18420"/>
    </ligand>
</feature>
<sequence length="802" mass="86770">MANTKKTTLDITGMTCAACSNRIEKKLNKLDDVNAQVNLTTEKATVEYNPDQHDVQEFINTIQHLGYGVAVETVELDITGMTCAACSSRIEKVLNKMDGVQNATVNLTTEQAKVDYYPEETDADKLVTRIQKLGYDASIKDNNKDQTSRKAEALQHKLIKLIISAVLSLPLLMLMFVHLFNMHIPALFTNPWFQFILATPVQFIIGWQFYVGAYKNLRNGGANMDVLVAVGTSAAYFYSIYEMVRWLNGSTTQPHLYFETSAVLITLILFGKYLEARAKSQTTNALGELLSLQAKEARILKDGNEVMIPLNEVHVGDTLIVKPGEKIPVDGKIIKGMTAIDESMLTGESIPVEKNVDDTVIGSTMNKNGTITMTATKVGGDTALANIIKVVEEAQSSKAPIQRLADIISGYFVPIVVGIALLTFIVWITLVTPGTFEPALVASISVLVIACPCALGLATPTSIMVGTGRAAENGILFKGGEFVERTHQIDTIVLDKTGTITNGRPVVTDYHGDNQTLQLLATAEKDSEHPLAEAIVNYAKEKQLILTETTTFKAVPGHGIEATIDHHYILVGNRKLMADNDISLPKHISDDLTHYERDGKTAMLIAVNYSLTGIIAVADTVKDHAKDAIKQLHDMGIEVAMLTGDNKNTAQAIAKQVGIDTVIADILPEEKAAQIAKLQQQGKKVAMVGDGVNDAPALVKADIGIAIGTGTEVAIEAADITILGGDLMLIPKAIYASKATIRNIRQNLFWAFGYNIAGIPIAALGLLAPWVAGAAMALSSVSVVTNALRLKKMRLEPRRKDA</sequence>
<protein>
    <recommendedName>
        <fullName>Copper-exporting P-type ATPase</fullName>
        <ecNumber>7.2.2.8</ecNumber>
    </recommendedName>
    <alternativeName>
        <fullName>Copper-exporting P-type ATPase A</fullName>
    </alternativeName>
    <alternativeName>
        <fullName>Cu(+)-exporting ATPase</fullName>
    </alternativeName>
</protein>
<accession>A8Z3F8</accession>
<reference key="1">
    <citation type="journal article" date="2007" name="BMC Microbiol.">
        <title>Subtle genetic changes enhance virulence of methicillin resistant and sensitive Staphylococcus aureus.</title>
        <authorList>
            <person name="Highlander S.K."/>
            <person name="Hulten K.G."/>
            <person name="Qin X."/>
            <person name="Jiang H."/>
            <person name="Yerrapragada S."/>
            <person name="Mason E.O. Jr."/>
            <person name="Shang Y."/>
            <person name="Williams T.M."/>
            <person name="Fortunov R.M."/>
            <person name="Liu Y."/>
            <person name="Igboeli O."/>
            <person name="Petrosino J."/>
            <person name="Tirumalai M."/>
            <person name="Uzman A."/>
            <person name="Fox G.E."/>
            <person name="Cardenas A.M."/>
            <person name="Muzny D.M."/>
            <person name="Hemphill L."/>
            <person name="Ding Y."/>
            <person name="Dugan S."/>
            <person name="Blyth P.R."/>
            <person name="Buhay C.J."/>
            <person name="Dinh H.H."/>
            <person name="Hawes A.C."/>
            <person name="Holder M."/>
            <person name="Kovar C.L."/>
            <person name="Lee S.L."/>
            <person name="Liu W."/>
            <person name="Nazareth L.V."/>
            <person name="Wang Q."/>
            <person name="Zhou J."/>
            <person name="Kaplan S.L."/>
            <person name="Weinstock G.M."/>
        </authorList>
    </citation>
    <scope>NUCLEOTIDE SEQUENCE [LARGE SCALE GENOMIC DNA]</scope>
    <source>
        <strain>USA300 / TCH1516</strain>
    </source>
</reference>
<gene>
    <name type="primary">copA</name>
    <name type="ordered locus">USA300HOU_2552</name>
</gene>